<feature type="initiator methionine" description="Removed" evidence="6">
    <location>
        <position position="1"/>
    </location>
</feature>
<feature type="chain" id="PRO_0000204781" description="Transgelin">
    <location>
        <begin position="2"/>
        <end position="201"/>
    </location>
</feature>
<feature type="domain" description="Calponin-homology (CH)" evidence="3">
    <location>
        <begin position="24"/>
        <end position="137"/>
    </location>
</feature>
<feature type="repeat" description="Calponin-like">
    <location>
        <begin position="175"/>
        <end position="200"/>
    </location>
</feature>
<feature type="modified residue" description="N-acetylalanine" evidence="6">
    <location>
        <position position="2"/>
    </location>
</feature>
<feature type="modified residue" description="Phosphoserine" evidence="5">
    <location>
        <position position="166"/>
    </location>
</feature>
<feature type="modified residue" description="N6-acetyllysine" evidence="2">
    <location>
        <position position="172"/>
    </location>
</feature>
<feature type="modified residue" description="Phosphoserine" evidence="8">
    <location>
        <position position="181"/>
    </location>
</feature>
<feature type="modified residue" description="Omega-N-methylarginine" evidence="7">
    <location>
        <position position="183"/>
    </location>
</feature>
<feature type="sequence variant" id="VAR_048670" description="In dbSNP:rs12284316.">
    <original>N</original>
    <variation>S</variation>
    <location>
        <position position="182"/>
    </location>
</feature>
<feature type="sequence conflict" description="In Ref. 1; AAA58351." evidence="4" ref="1">
    <original>R</original>
    <variation>P</variation>
    <location>
        <position position="49"/>
    </location>
</feature>
<feature type="sequence conflict" description="In Ref. 2; AAA58375." evidence="4" ref="2">
    <original>D</original>
    <variation>E</variation>
    <location>
        <position position="72"/>
    </location>
</feature>
<feature type="sequence conflict" description="In Ref. 2; AAA58375." evidence="4" ref="2">
    <original>Y</original>
    <variation>C</variation>
    <location>
        <position position="104"/>
    </location>
</feature>
<feature type="sequence conflict" description="In Ref. 1; AAA58351." evidence="4" ref="1">
    <original>Y</original>
    <variation>S</variation>
    <location>
        <position position="104"/>
    </location>
</feature>
<feature type="sequence conflict" description="In Ref. 2; AAA58375." evidence="4" ref="2">
    <original>M</original>
    <variation>V</variation>
    <location>
        <position position="179"/>
    </location>
</feature>
<gene>
    <name type="primary">TAGLN</name>
    <name type="synonym">SM22</name>
    <name type="synonym">WS3-10</name>
</gene>
<evidence type="ECO:0000250" key="1"/>
<evidence type="ECO:0000250" key="2">
    <source>
        <dbReference type="UniProtKB" id="P37804"/>
    </source>
</evidence>
<evidence type="ECO:0000255" key="3">
    <source>
        <dbReference type="PROSITE-ProRule" id="PRU00044"/>
    </source>
</evidence>
<evidence type="ECO:0000305" key="4"/>
<evidence type="ECO:0007744" key="5">
    <source>
    </source>
</evidence>
<evidence type="ECO:0007744" key="6">
    <source>
    </source>
</evidence>
<evidence type="ECO:0007744" key="7">
    <source>
    </source>
</evidence>
<evidence type="ECO:0007744" key="8">
    <source>
    </source>
</evidence>
<accession>Q01995</accession>
<accession>O15542</accession>
<comment type="function">
    <text evidence="1">Actin cross-linking/gelling protein (By similarity). Involved in calcium interactions and contractile properties of the cell that may contribute to replicative senescence.</text>
</comment>
<comment type="interaction">
    <interactant intactId="EBI-1054248">
        <id>Q01995</id>
    </interactant>
    <interactant intactId="EBI-739467">
        <id>Q9H8Y8</id>
        <label>GORASP2</label>
    </interactant>
    <organismsDiffer>false</organismsDiffer>
    <experiments>6</experiments>
</comment>
<comment type="interaction">
    <interactant intactId="EBI-1054248">
        <id>Q01995</id>
    </interactant>
    <interactant intactId="EBI-475981">
        <id>P08069</id>
        <label>IGF1R</label>
    </interactant>
    <organismsDiffer>false</organismsDiffer>
    <experiments>2</experiments>
</comment>
<comment type="interaction">
    <interactant intactId="EBI-1054248">
        <id>Q01995</id>
    </interactant>
    <interactant intactId="EBI-717399">
        <id>Q9BSI4</id>
        <label>TINF2</label>
    </interactant>
    <organismsDiffer>false</organismsDiffer>
    <experiments>2</experiments>
</comment>
<comment type="subcellular location">
    <subcellularLocation>
        <location evidence="4">Cytoplasm</location>
    </subcellularLocation>
</comment>
<comment type="induction">
    <text>Overexpressed in senescent human fibroblasts.</text>
</comment>
<comment type="similarity">
    <text evidence="4">Belongs to the calponin family.</text>
</comment>
<comment type="online information" name="Atlas of Genetics and Cytogenetics in Oncology and Haematology">
    <link uri="https://atlasgeneticsoncology.org/gene/46168/TAGLN"/>
</comment>
<keyword id="KW-0007">Acetylation</keyword>
<keyword id="KW-0009">Actin-binding</keyword>
<keyword id="KW-0963">Cytoplasm</keyword>
<keyword id="KW-0488">Methylation</keyword>
<keyword id="KW-0514">Muscle protein</keyword>
<keyword id="KW-0597">Phosphoprotein</keyword>
<keyword id="KW-1267">Proteomics identification</keyword>
<keyword id="KW-1185">Reference proteome</keyword>
<protein>
    <recommendedName>
        <fullName>Transgelin</fullName>
    </recommendedName>
    <alternativeName>
        <fullName>22 kDa actin-binding protein</fullName>
    </alternativeName>
    <alternativeName>
        <fullName>Protein WS3-10</fullName>
    </alternativeName>
    <alternativeName>
        <fullName>Smooth muscle protein 22-alpha</fullName>
        <shortName>SM22-alpha</shortName>
    </alternativeName>
</protein>
<dbReference type="EMBL" id="M95787">
    <property type="protein sequence ID" value="AAA58351.1"/>
    <property type="molecule type" value="mRNA"/>
</dbReference>
<dbReference type="EMBL" id="M83106">
    <property type="protein sequence ID" value="AAA58375.1"/>
    <property type="molecule type" value="mRNA"/>
</dbReference>
<dbReference type="EMBL" id="AF013711">
    <property type="protein sequence ID" value="AAC21582.1"/>
    <property type="molecule type" value="Genomic_DNA"/>
</dbReference>
<dbReference type="EMBL" id="D17409">
    <property type="protein sequence ID" value="BAA21811.1"/>
    <property type="molecule type" value="mRNA"/>
</dbReference>
<dbReference type="EMBL" id="D84342">
    <property type="protein sequence ID" value="BAA21839.1"/>
    <property type="molecule type" value="Genomic_DNA"/>
</dbReference>
<dbReference type="EMBL" id="BC004927">
    <property type="protein sequence ID" value="AAH04927.1"/>
    <property type="molecule type" value="mRNA"/>
</dbReference>
<dbReference type="EMBL" id="BC065829">
    <property type="protein sequence ID" value="AAH65829.1"/>
    <property type="molecule type" value="mRNA"/>
</dbReference>
<dbReference type="CCDS" id="CCDS8381.1"/>
<dbReference type="PIR" id="JC5577">
    <property type="entry name" value="JS0774"/>
</dbReference>
<dbReference type="RefSeq" id="NP_001001522.1">
    <property type="nucleotide sequence ID" value="NM_001001522.2"/>
</dbReference>
<dbReference type="RefSeq" id="NP_003177.2">
    <property type="nucleotide sequence ID" value="NM_003186.3"/>
</dbReference>
<dbReference type="BMRB" id="Q01995"/>
<dbReference type="SMR" id="Q01995"/>
<dbReference type="BioGRID" id="112739">
    <property type="interactions" value="78"/>
</dbReference>
<dbReference type="FunCoup" id="Q01995">
    <property type="interactions" value="182"/>
</dbReference>
<dbReference type="IntAct" id="Q01995">
    <property type="interactions" value="293"/>
</dbReference>
<dbReference type="MINT" id="Q01995"/>
<dbReference type="STRING" id="9606.ENSP00000376678"/>
<dbReference type="DrugBank" id="DB11638">
    <property type="generic name" value="Artenimol"/>
</dbReference>
<dbReference type="GlyGen" id="Q01995">
    <property type="glycosylation" value="4 sites, 1 O-linked glycan (4 sites)"/>
</dbReference>
<dbReference type="iPTMnet" id="Q01995"/>
<dbReference type="MetOSite" id="Q01995"/>
<dbReference type="PhosphoSitePlus" id="Q01995"/>
<dbReference type="SwissPalm" id="Q01995"/>
<dbReference type="BioMuta" id="TAGLN"/>
<dbReference type="DMDM" id="3123283"/>
<dbReference type="REPRODUCTION-2DPAGE" id="IPI00216138"/>
<dbReference type="CPTAC" id="CPTAC-443"/>
<dbReference type="CPTAC" id="CPTAC-726"/>
<dbReference type="jPOST" id="Q01995"/>
<dbReference type="MassIVE" id="Q01995"/>
<dbReference type="PaxDb" id="9606-ENSP00000432282"/>
<dbReference type="PeptideAtlas" id="Q01995"/>
<dbReference type="ProteomicsDB" id="58029"/>
<dbReference type="Pumba" id="Q01995"/>
<dbReference type="ABCD" id="Q01995">
    <property type="antibodies" value="1 sequenced antibody"/>
</dbReference>
<dbReference type="Antibodypedia" id="3666">
    <property type="antibodies" value="739 antibodies from 40 providers"/>
</dbReference>
<dbReference type="CPTC" id="Q01995">
    <property type="antibodies" value="1 antibody"/>
</dbReference>
<dbReference type="DNASU" id="6876"/>
<dbReference type="Ensembl" id="ENST00000278968.10">
    <property type="protein sequence ID" value="ENSP00000278968.6"/>
    <property type="gene ID" value="ENSG00000149591.17"/>
</dbReference>
<dbReference type="Ensembl" id="ENST00000392951.9">
    <property type="protein sequence ID" value="ENSP00000376678.4"/>
    <property type="gene ID" value="ENSG00000149591.17"/>
</dbReference>
<dbReference type="Ensembl" id="ENST00000525531.5">
    <property type="protein sequence ID" value="ENSP00000432054.1"/>
    <property type="gene ID" value="ENSG00000149591.17"/>
</dbReference>
<dbReference type="Ensembl" id="ENST00000530649.5">
    <property type="protein sequence ID" value="ENSP00000431941.1"/>
    <property type="gene ID" value="ENSG00000149591.17"/>
</dbReference>
<dbReference type="Ensembl" id="ENST00000532870.5">
    <property type="protein sequence ID" value="ENSP00000432282.1"/>
    <property type="gene ID" value="ENSG00000149591.17"/>
</dbReference>
<dbReference type="GeneID" id="6876"/>
<dbReference type="KEGG" id="hsa:6876"/>
<dbReference type="MANE-Select" id="ENST00000392951.9">
    <property type="protein sequence ID" value="ENSP00000376678.4"/>
    <property type="RefSeq nucleotide sequence ID" value="NM_003186.5"/>
    <property type="RefSeq protein sequence ID" value="NP_003177.2"/>
</dbReference>
<dbReference type="AGR" id="HGNC:11553"/>
<dbReference type="CTD" id="6876"/>
<dbReference type="DisGeNET" id="6876"/>
<dbReference type="GeneCards" id="TAGLN"/>
<dbReference type="HGNC" id="HGNC:11553">
    <property type="gene designation" value="TAGLN"/>
</dbReference>
<dbReference type="HPA" id="ENSG00000149591">
    <property type="expression patterns" value="Tissue enhanced (endometrium, intestine)"/>
</dbReference>
<dbReference type="MIM" id="600818">
    <property type="type" value="gene"/>
</dbReference>
<dbReference type="neXtProt" id="NX_Q01995"/>
<dbReference type="OpenTargets" id="ENSG00000149591"/>
<dbReference type="PharmGKB" id="PA36324"/>
<dbReference type="VEuPathDB" id="HostDB:ENSG00000149591"/>
<dbReference type="eggNOG" id="KOG2046">
    <property type="taxonomic scope" value="Eukaryota"/>
</dbReference>
<dbReference type="GeneTree" id="ENSGT00940000155162"/>
<dbReference type="HOGENOM" id="CLU_055232_1_0_1"/>
<dbReference type="InParanoid" id="Q01995"/>
<dbReference type="OMA" id="NWFHRKA"/>
<dbReference type="OrthoDB" id="21595at2759"/>
<dbReference type="PAN-GO" id="Q01995">
    <property type="GO annotations" value="1 GO annotation based on evolutionary models"/>
</dbReference>
<dbReference type="PhylomeDB" id="Q01995"/>
<dbReference type="TreeFam" id="TF313921"/>
<dbReference type="PathwayCommons" id="Q01995"/>
<dbReference type="SignaLink" id="Q01995"/>
<dbReference type="SIGNOR" id="Q01995"/>
<dbReference type="BioGRID-ORCS" id="6876">
    <property type="hits" value="7 hits in 1153 CRISPR screens"/>
</dbReference>
<dbReference type="ChiTaRS" id="TAGLN">
    <property type="organism name" value="human"/>
</dbReference>
<dbReference type="GeneWiki" id="TAGLN"/>
<dbReference type="GenomeRNAi" id="6876"/>
<dbReference type="Pharos" id="Q01995">
    <property type="development level" value="Tbio"/>
</dbReference>
<dbReference type="PRO" id="PR:Q01995"/>
<dbReference type="Proteomes" id="UP000005640">
    <property type="component" value="Chromosome 11"/>
</dbReference>
<dbReference type="RNAct" id="Q01995">
    <property type="molecule type" value="protein"/>
</dbReference>
<dbReference type="Bgee" id="ENSG00000149591">
    <property type="expression patterns" value="Expressed in saphenous vein and 202 other cell types or tissues"/>
</dbReference>
<dbReference type="ExpressionAtlas" id="Q01995">
    <property type="expression patterns" value="baseline and differential"/>
</dbReference>
<dbReference type="GO" id="GO:0005737">
    <property type="term" value="C:cytoplasm"/>
    <property type="evidence" value="ECO:0007669"/>
    <property type="project" value="UniProtKB-SubCell"/>
</dbReference>
<dbReference type="GO" id="GO:0003779">
    <property type="term" value="F:actin binding"/>
    <property type="evidence" value="ECO:0007669"/>
    <property type="project" value="UniProtKB-KW"/>
</dbReference>
<dbReference type="GO" id="GO:0030855">
    <property type="term" value="P:epithelial cell differentiation"/>
    <property type="evidence" value="ECO:0000314"/>
    <property type="project" value="UniProtKB"/>
</dbReference>
<dbReference type="GO" id="GO:0007517">
    <property type="term" value="P:muscle organ development"/>
    <property type="evidence" value="ECO:0000304"/>
    <property type="project" value="ProtInc"/>
</dbReference>
<dbReference type="CDD" id="cd21279">
    <property type="entry name" value="CH_TAGLN"/>
    <property type="match status" value="1"/>
</dbReference>
<dbReference type="FunFam" id="1.10.418.10:FF:000039">
    <property type="entry name" value="Transgelin"/>
    <property type="match status" value="1"/>
</dbReference>
<dbReference type="Gene3D" id="1.10.418.10">
    <property type="entry name" value="Calponin-like domain"/>
    <property type="match status" value="1"/>
</dbReference>
<dbReference type="InterPro" id="IPR050606">
    <property type="entry name" value="Calponin-like"/>
</dbReference>
<dbReference type="InterPro" id="IPR000557">
    <property type="entry name" value="Calponin_repeat"/>
</dbReference>
<dbReference type="InterPro" id="IPR001715">
    <property type="entry name" value="CH_dom"/>
</dbReference>
<dbReference type="InterPro" id="IPR036872">
    <property type="entry name" value="CH_dom_sf"/>
</dbReference>
<dbReference type="InterPro" id="IPR003096">
    <property type="entry name" value="SM22_calponin"/>
</dbReference>
<dbReference type="PANTHER" id="PTHR47385">
    <property type="entry name" value="CALPONIN"/>
    <property type="match status" value="1"/>
</dbReference>
<dbReference type="PANTHER" id="PTHR47385:SF16">
    <property type="entry name" value="TRANSGELIN"/>
    <property type="match status" value="1"/>
</dbReference>
<dbReference type="Pfam" id="PF00402">
    <property type="entry name" value="Calponin"/>
    <property type="match status" value="1"/>
</dbReference>
<dbReference type="Pfam" id="PF00307">
    <property type="entry name" value="CH"/>
    <property type="match status" value="1"/>
</dbReference>
<dbReference type="PRINTS" id="PR00888">
    <property type="entry name" value="SM22CALPONIN"/>
</dbReference>
<dbReference type="PRINTS" id="PR00890">
    <property type="entry name" value="TRANSGELIN"/>
</dbReference>
<dbReference type="SMART" id="SM00033">
    <property type="entry name" value="CH"/>
    <property type="match status" value="1"/>
</dbReference>
<dbReference type="SUPFAM" id="SSF47576">
    <property type="entry name" value="Calponin-homology domain, CH-domain"/>
    <property type="match status" value="1"/>
</dbReference>
<dbReference type="PROSITE" id="PS01052">
    <property type="entry name" value="CALPONIN_1"/>
    <property type="match status" value="1"/>
</dbReference>
<dbReference type="PROSITE" id="PS51122">
    <property type="entry name" value="CALPONIN_2"/>
    <property type="match status" value="1"/>
</dbReference>
<dbReference type="PROSITE" id="PS50021">
    <property type="entry name" value="CH"/>
    <property type="match status" value="1"/>
</dbReference>
<name>TAGL_HUMAN</name>
<sequence length="201" mass="22611">MANKGPSYGMSREVQSKIEKKYDEELEERLVEWIIVQCGPDVGRPDRGRLGFQVWLKNGVILSKLVNSLYPDGSKPVKVPENPPSMVFKQMEQVAQFLKAAEDYGVIKTDMFQTVDLFEGKDMAAVQRTLMALGSLAVTKNDGHYRGDPNWFMKKAQEHKREFTESQLQEGKHVIGLQMGSNRGASQAGMTGYGRPRQIIS</sequence>
<organism>
    <name type="scientific">Homo sapiens</name>
    <name type="common">Human</name>
    <dbReference type="NCBI Taxonomy" id="9606"/>
    <lineage>
        <taxon>Eukaryota</taxon>
        <taxon>Metazoa</taxon>
        <taxon>Chordata</taxon>
        <taxon>Craniata</taxon>
        <taxon>Vertebrata</taxon>
        <taxon>Euteleostomi</taxon>
        <taxon>Mammalia</taxon>
        <taxon>Eutheria</taxon>
        <taxon>Euarchontoglires</taxon>
        <taxon>Primates</taxon>
        <taxon>Haplorrhini</taxon>
        <taxon>Catarrhini</taxon>
        <taxon>Hominidae</taxon>
        <taxon>Homo</taxon>
    </lineage>
</organism>
<reference key="1">
    <citation type="journal article" date="1992" name="Biochem. Biophys. Res. Commun.">
        <title>A novel gene encoding a smooth muscle protein is overexpressed in senescent human fibroblasts.</title>
        <authorList>
            <person name="Thweatt R."/>
            <person name="Lumpkin C.K. Jr."/>
            <person name="Goldstein S."/>
        </authorList>
    </citation>
    <scope>NUCLEOTIDE SEQUENCE [MRNA]</scope>
    <source>
        <tissue>Fibroblast</tissue>
    </source>
</reference>
<reference key="2">
    <citation type="journal article" date="1991" name="Biochem. Int.">
        <title>Gene cloning and nucleotide sequence of SM22 alpha from the chicken gizzard smooth muscle.</title>
        <authorList>
            <person name="Nishida W."/>
            <person name="Kitami Y."/>
            <person name="Abe M."/>
            <person name="Kiwada K."/>
        </authorList>
    </citation>
    <scope>NUCLEOTIDE SEQUENCE [MRNA]</scope>
</reference>
<reference key="3">
    <citation type="journal article" date="1998" name="Genomics">
        <title>Expression and cytogenetic localization of the human SM22 gene (TAGLN).</title>
        <authorList>
            <person name="Camoretti-Mercado B."/>
            <person name="Forsythe S.M."/>
            <person name="Lebeau M.M."/>
            <person name="Espinosa R.D. III"/>
            <person name="Vieira J.E."/>
            <person name="Halayko A.J."/>
            <person name="Willadsen S."/>
            <person name="Kurtz B."/>
            <person name="Ober C."/>
            <person name="Evans G.A."/>
            <person name="Thweatt R."/>
            <person name="Shapiro S."/>
            <person name="Niu Q."/>
            <person name="Qin Y."/>
            <person name="Padrid P.A."/>
            <person name="Solway J."/>
        </authorList>
    </citation>
    <scope>NUCLEOTIDE SEQUENCE [GENOMIC DNA]</scope>
</reference>
<reference key="4">
    <citation type="journal article" date="1997" name="J. Biochem.">
        <title>Structure and expression of the human SM22alpha gene, assignment of the gene to chromosome 11, and repression of the promoter activity by cytosine DNA methylation.</title>
        <authorList>
            <person name="Yamamura H."/>
            <person name="Masuda H."/>
            <person name="Ikeda W."/>
            <person name="Tokuyama T."/>
            <person name="Takagi M."/>
            <person name="Shibata N."/>
            <person name="Tatsuta M."/>
            <person name="Takahashi K."/>
        </authorList>
    </citation>
    <scope>NUCLEOTIDE SEQUENCE [GENOMIC DNA / MRNA]</scope>
    <source>
        <tissue>Aorta</tissue>
        <tissue>Peripheral blood</tissue>
    </source>
</reference>
<reference key="5">
    <citation type="journal article" date="2004" name="Genome Res.">
        <title>The status, quality, and expansion of the NIH full-length cDNA project: the Mammalian Gene Collection (MGC).</title>
        <authorList>
            <consortium name="The MGC Project Team"/>
        </authorList>
    </citation>
    <scope>NUCLEOTIDE SEQUENCE [LARGE SCALE MRNA]</scope>
    <source>
        <tissue>Uterus</tissue>
    </source>
</reference>
<reference key="6">
    <citation type="journal article" date="2011" name="BMC Syst. Biol.">
        <title>Initial characterization of the human central proteome.</title>
        <authorList>
            <person name="Burkard T.R."/>
            <person name="Planyavsky M."/>
            <person name="Kaupe I."/>
            <person name="Breitwieser F.P."/>
            <person name="Buerckstuemmer T."/>
            <person name="Bennett K.L."/>
            <person name="Superti-Furga G."/>
            <person name="Colinge J."/>
        </authorList>
    </citation>
    <scope>IDENTIFICATION BY MASS SPECTROMETRY [LARGE SCALE ANALYSIS]</scope>
</reference>
<reference key="7">
    <citation type="journal article" date="2011" name="Sci. Signal.">
        <title>System-wide temporal characterization of the proteome and phosphoproteome of human embryonic stem cell differentiation.</title>
        <authorList>
            <person name="Rigbolt K.T."/>
            <person name="Prokhorova T.A."/>
            <person name="Akimov V."/>
            <person name="Henningsen J."/>
            <person name="Johansen P.T."/>
            <person name="Kratchmarova I."/>
            <person name="Kassem M."/>
            <person name="Mann M."/>
            <person name="Olsen J.V."/>
            <person name="Blagoev B."/>
        </authorList>
    </citation>
    <scope>PHOSPHORYLATION [LARGE SCALE ANALYSIS] AT SER-166</scope>
    <scope>IDENTIFICATION BY MASS SPECTROMETRY [LARGE SCALE ANALYSIS]</scope>
</reference>
<reference key="8">
    <citation type="journal article" date="2012" name="Proc. Natl. Acad. Sci. U.S.A.">
        <title>N-terminal acetylome analyses and functional insights of the N-terminal acetyltransferase NatB.</title>
        <authorList>
            <person name="Van Damme P."/>
            <person name="Lasa M."/>
            <person name="Polevoda B."/>
            <person name="Gazquez C."/>
            <person name="Elosegui-Artola A."/>
            <person name="Kim D.S."/>
            <person name="De Juan-Pardo E."/>
            <person name="Demeyer K."/>
            <person name="Hole K."/>
            <person name="Larrea E."/>
            <person name="Timmerman E."/>
            <person name="Prieto J."/>
            <person name="Arnesen T."/>
            <person name="Sherman F."/>
            <person name="Gevaert K."/>
            <person name="Aldabe R."/>
        </authorList>
    </citation>
    <scope>ACETYLATION [LARGE SCALE ANALYSIS] AT ALA-2</scope>
    <scope>CLEAVAGE OF INITIATOR METHIONINE [LARGE SCALE ANALYSIS]</scope>
    <scope>IDENTIFICATION BY MASS SPECTROMETRY [LARGE SCALE ANALYSIS]</scope>
</reference>
<reference key="9">
    <citation type="journal article" date="2014" name="J. Proteomics">
        <title>An enzyme assisted RP-RPLC approach for in-depth analysis of human liver phosphoproteome.</title>
        <authorList>
            <person name="Bian Y."/>
            <person name="Song C."/>
            <person name="Cheng K."/>
            <person name="Dong M."/>
            <person name="Wang F."/>
            <person name="Huang J."/>
            <person name="Sun D."/>
            <person name="Wang L."/>
            <person name="Ye M."/>
            <person name="Zou H."/>
        </authorList>
    </citation>
    <scope>PHOSPHORYLATION [LARGE SCALE ANALYSIS] AT SER-181</scope>
    <scope>IDENTIFICATION BY MASS SPECTROMETRY [LARGE SCALE ANALYSIS]</scope>
    <source>
        <tissue>Liver</tissue>
    </source>
</reference>
<reference key="10">
    <citation type="journal article" date="2014" name="Mol. Cell. Proteomics">
        <title>Immunoaffinity enrichment and mass spectrometry analysis of protein methylation.</title>
        <authorList>
            <person name="Guo A."/>
            <person name="Gu H."/>
            <person name="Zhou J."/>
            <person name="Mulhern D."/>
            <person name="Wang Y."/>
            <person name="Lee K.A."/>
            <person name="Yang V."/>
            <person name="Aguiar M."/>
            <person name="Kornhauser J."/>
            <person name="Jia X."/>
            <person name="Ren J."/>
            <person name="Beausoleil S.A."/>
            <person name="Silva J.C."/>
            <person name="Vemulapalli V."/>
            <person name="Bedford M.T."/>
            <person name="Comb M.J."/>
        </authorList>
    </citation>
    <scope>METHYLATION [LARGE SCALE ANALYSIS] AT ARG-183</scope>
    <scope>IDENTIFICATION BY MASS SPECTROMETRY [LARGE SCALE ANALYSIS]</scope>
    <source>
        <tissue>Colon carcinoma</tissue>
    </source>
</reference>
<proteinExistence type="evidence at protein level"/>